<name>KKA9_STRRI</name>
<comment type="function">
    <text>Resistance to kanamycin and structurally-related aminoglycosides, including amikacin.</text>
</comment>
<comment type="catalytic activity">
    <reaction>
        <text>kanamycin A + ATP = kanamycin 3'-phosphate + ADP + H(+)</text>
        <dbReference type="Rhea" id="RHEA:24256"/>
        <dbReference type="ChEBI" id="CHEBI:15378"/>
        <dbReference type="ChEBI" id="CHEBI:30616"/>
        <dbReference type="ChEBI" id="CHEBI:57909"/>
        <dbReference type="ChEBI" id="CHEBI:58214"/>
        <dbReference type="ChEBI" id="CHEBI:456216"/>
        <dbReference type="EC" id="2.7.1.95"/>
    </reaction>
</comment>
<comment type="similarity">
    <text evidence="2">Belongs to the aminoglycoside phosphotransferase family.</text>
</comment>
<reference key="1">
    <citation type="journal article" date="1988" name="Gene">
        <title>Nucleotide sequence of the ribostamycin phosphotransferase gene and of its control region in Streptomyces ribosidificus.</title>
        <authorList>
            <person name="Hoshiko S."/>
            <person name="Nojiri C."/>
            <person name="Matsunaga K."/>
            <person name="Katsumata K."/>
            <person name="Satoh E."/>
            <person name="Nagaoka K."/>
        </authorList>
    </citation>
    <scope>NUCLEOTIDE SEQUENCE [GENOMIC DNA]</scope>
</reference>
<accession>P13250</accession>
<gene>
    <name type="primary">rph</name>
</gene>
<protein>
    <recommendedName>
        <fullName>Aminoglycoside 3'-phosphotransferase</fullName>
        <ecNumber>2.7.1.95</ecNumber>
    </recommendedName>
    <alternativeName>
        <fullName>APH(3')</fullName>
    </alternativeName>
    <alternativeName>
        <fullName>Kanamycin kinase</fullName>
    </alternativeName>
    <alternativeName>
        <fullName>Ribostamycin phosphotransferase</fullName>
    </alternativeName>
</protein>
<proteinExistence type="inferred from homology"/>
<organism>
    <name type="scientific">Streptomyces ribosidificus</name>
    <dbReference type="NCBI Taxonomy" id="80859"/>
    <lineage>
        <taxon>Bacteria</taxon>
        <taxon>Bacillati</taxon>
        <taxon>Actinomycetota</taxon>
        <taxon>Actinomycetes</taxon>
        <taxon>Kitasatosporales</taxon>
        <taxon>Streptomycetaceae</taxon>
        <taxon>Streptomyces</taxon>
    </lineage>
</organism>
<sequence>MESTLRRTYPHHTWHLVNEGDSGAFVYRLTGHGPELYAKIAPRTPENSAFHLDGEADRLDWLARHGISVPRVVERGADDTTAWLVTEAVPGAAASEEWPEDERAAVVDAIAEMARTLHELPVSECPFDRRLDVTGEARHNVREGLVDLDDLQEEPAGWTGDQLLAELDLTRPEKEDLVVCHGDLCPNNVLLDPETHRITGLIDVGRLRLATCHADLALAARELAIDEDPWFGPAYAERFLERYGAHHVDQEKMAFYQLLDEFF</sequence>
<feature type="chain" id="PRO_0000204812" description="Aminoglycoside 3'-phosphotransferase">
    <location>
        <begin position="1"/>
        <end position="263"/>
    </location>
</feature>
<feature type="active site" description="Proton acceptor" evidence="1">
    <location>
        <position position="183"/>
    </location>
</feature>
<dbReference type="EC" id="2.7.1.95"/>
<dbReference type="EMBL" id="M22126">
    <property type="protein sequence ID" value="AAC32025.1"/>
    <property type="molecule type" value="Genomic_DNA"/>
</dbReference>
<dbReference type="RefSeq" id="WP_063842177.1">
    <property type="nucleotide sequence ID" value="NG_047452.1"/>
</dbReference>
<dbReference type="SMR" id="P13250"/>
<dbReference type="CARD" id="ARO:3002650">
    <property type="molecule name" value="APH(3')-Vb"/>
    <property type="mechanism identifier" value="ARO:0001004"/>
    <property type="mechanism name" value="antibiotic inactivation"/>
</dbReference>
<dbReference type="KEGG" id="ag:AAC32025"/>
<dbReference type="GO" id="GO:0005524">
    <property type="term" value="F:ATP binding"/>
    <property type="evidence" value="ECO:0007669"/>
    <property type="project" value="UniProtKB-KW"/>
</dbReference>
<dbReference type="GO" id="GO:0008910">
    <property type="term" value="F:kanamycin kinase activity"/>
    <property type="evidence" value="ECO:0007669"/>
    <property type="project" value="UniProtKB-EC"/>
</dbReference>
<dbReference type="GO" id="GO:0046677">
    <property type="term" value="P:response to antibiotic"/>
    <property type="evidence" value="ECO:0007669"/>
    <property type="project" value="UniProtKB-KW"/>
</dbReference>
<dbReference type="CDD" id="cd05150">
    <property type="entry name" value="APH"/>
    <property type="match status" value="1"/>
</dbReference>
<dbReference type="Gene3D" id="3.90.1200.10">
    <property type="match status" value="1"/>
</dbReference>
<dbReference type="Gene3D" id="3.30.200.20">
    <property type="entry name" value="Phosphorylase Kinase, domain 1"/>
    <property type="match status" value="1"/>
</dbReference>
<dbReference type="InterPro" id="IPR051678">
    <property type="entry name" value="AGP_Transferase"/>
</dbReference>
<dbReference type="InterPro" id="IPR002575">
    <property type="entry name" value="Aminoglycoside_PTrfase"/>
</dbReference>
<dbReference type="InterPro" id="IPR024165">
    <property type="entry name" value="Kan/Strep_kinase"/>
</dbReference>
<dbReference type="InterPro" id="IPR011009">
    <property type="entry name" value="Kinase-like_dom_sf"/>
</dbReference>
<dbReference type="NCBIfam" id="NF033068">
    <property type="entry name" value="APH_3p"/>
    <property type="match status" value="1"/>
</dbReference>
<dbReference type="NCBIfam" id="NF032897">
    <property type="entry name" value="APH_3p_V"/>
    <property type="match status" value="1"/>
</dbReference>
<dbReference type="PANTHER" id="PTHR21310:SF41">
    <property type="entry name" value="3'-PHOSPHOTRANSFERASE, PUTATIVE-RELATED"/>
    <property type="match status" value="1"/>
</dbReference>
<dbReference type="PANTHER" id="PTHR21310">
    <property type="entry name" value="AMINOGLYCOSIDE PHOSPHOTRANSFERASE-RELATED-RELATED"/>
    <property type="match status" value="1"/>
</dbReference>
<dbReference type="Pfam" id="PF01636">
    <property type="entry name" value="APH"/>
    <property type="match status" value="1"/>
</dbReference>
<dbReference type="PIRSF" id="PIRSF000706">
    <property type="entry name" value="Kanamycin_kin"/>
    <property type="match status" value="1"/>
</dbReference>
<dbReference type="SUPFAM" id="SSF56112">
    <property type="entry name" value="Protein kinase-like (PK-like)"/>
    <property type="match status" value="1"/>
</dbReference>
<evidence type="ECO:0000250" key="1"/>
<evidence type="ECO:0000305" key="2"/>
<keyword id="KW-0046">Antibiotic resistance</keyword>
<keyword id="KW-0067">ATP-binding</keyword>
<keyword id="KW-0418">Kinase</keyword>
<keyword id="KW-0547">Nucleotide-binding</keyword>
<keyword id="KW-0808">Transferase</keyword>